<organism>
    <name type="scientific">Rhodopseudomonas palustris (strain HaA2)</name>
    <dbReference type="NCBI Taxonomy" id="316058"/>
    <lineage>
        <taxon>Bacteria</taxon>
        <taxon>Pseudomonadati</taxon>
        <taxon>Pseudomonadota</taxon>
        <taxon>Alphaproteobacteria</taxon>
        <taxon>Hyphomicrobiales</taxon>
        <taxon>Nitrobacteraceae</taxon>
        <taxon>Rhodopseudomonas</taxon>
    </lineage>
</organism>
<evidence type="ECO:0000255" key="1">
    <source>
        <dbReference type="HAMAP-Rule" id="MF_01570"/>
    </source>
</evidence>
<reference key="1">
    <citation type="submission" date="2006-01" db="EMBL/GenBank/DDBJ databases">
        <title>Complete sequence of Rhodopseudomonas palustris HaA2.</title>
        <authorList>
            <consortium name="US DOE Joint Genome Institute"/>
            <person name="Copeland A."/>
            <person name="Lucas S."/>
            <person name="Lapidus A."/>
            <person name="Barry K."/>
            <person name="Detter J.C."/>
            <person name="Glavina T."/>
            <person name="Hammon N."/>
            <person name="Israni S."/>
            <person name="Pitluck S."/>
            <person name="Chain P."/>
            <person name="Malfatti S."/>
            <person name="Shin M."/>
            <person name="Vergez L."/>
            <person name="Schmutz J."/>
            <person name="Larimer F."/>
            <person name="Land M."/>
            <person name="Hauser L."/>
            <person name="Pelletier D.A."/>
            <person name="Kyrpides N."/>
            <person name="Anderson I."/>
            <person name="Oda Y."/>
            <person name="Harwood C.S."/>
            <person name="Richardson P."/>
        </authorList>
    </citation>
    <scope>NUCLEOTIDE SEQUENCE [LARGE SCALE GENOMIC DNA]</scope>
    <source>
        <strain>HaA2</strain>
    </source>
</reference>
<accession>Q2IWW0</accession>
<name>SYP_RHOP2</name>
<dbReference type="EC" id="6.1.1.15" evidence="1"/>
<dbReference type="EMBL" id="CP000250">
    <property type="protein sequence ID" value="ABD07300.1"/>
    <property type="molecule type" value="Genomic_DNA"/>
</dbReference>
<dbReference type="RefSeq" id="WP_011441485.1">
    <property type="nucleotide sequence ID" value="NC_007778.1"/>
</dbReference>
<dbReference type="SMR" id="Q2IWW0"/>
<dbReference type="STRING" id="316058.RPB_2597"/>
<dbReference type="KEGG" id="rpb:RPB_2597"/>
<dbReference type="eggNOG" id="COG0442">
    <property type="taxonomic scope" value="Bacteria"/>
</dbReference>
<dbReference type="HOGENOM" id="CLU_016739_4_2_5"/>
<dbReference type="OrthoDB" id="9809052at2"/>
<dbReference type="Proteomes" id="UP000008809">
    <property type="component" value="Chromosome"/>
</dbReference>
<dbReference type="GO" id="GO:0005829">
    <property type="term" value="C:cytosol"/>
    <property type="evidence" value="ECO:0007669"/>
    <property type="project" value="TreeGrafter"/>
</dbReference>
<dbReference type="GO" id="GO:0005524">
    <property type="term" value="F:ATP binding"/>
    <property type="evidence" value="ECO:0007669"/>
    <property type="project" value="UniProtKB-UniRule"/>
</dbReference>
<dbReference type="GO" id="GO:0004827">
    <property type="term" value="F:proline-tRNA ligase activity"/>
    <property type="evidence" value="ECO:0007669"/>
    <property type="project" value="UniProtKB-UniRule"/>
</dbReference>
<dbReference type="GO" id="GO:0006433">
    <property type="term" value="P:prolyl-tRNA aminoacylation"/>
    <property type="evidence" value="ECO:0007669"/>
    <property type="project" value="UniProtKB-UniRule"/>
</dbReference>
<dbReference type="CDD" id="cd00861">
    <property type="entry name" value="ProRS_anticodon_short"/>
    <property type="match status" value="1"/>
</dbReference>
<dbReference type="CDD" id="cd00779">
    <property type="entry name" value="ProRS_core_prok"/>
    <property type="match status" value="1"/>
</dbReference>
<dbReference type="FunFam" id="3.30.930.10:FF:000042">
    <property type="entry name" value="probable proline--tRNA ligase, mitochondrial"/>
    <property type="match status" value="1"/>
</dbReference>
<dbReference type="FunFam" id="3.40.50.800:FF:000032">
    <property type="entry name" value="Proline--tRNA ligase"/>
    <property type="match status" value="1"/>
</dbReference>
<dbReference type="Gene3D" id="3.40.50.800">
    <property type="entry name" value="Anticodon-binding domain"/>
    <property type="match status" value="1"/>
</dbReference>
<dbReference type="Gene3D" id="3.30.930.10">
    <property type="entry name" value="Bira Bifunctional Protein, Domain 2"/>
    <property type="match status" value="1"/>
</dbReference>
<dbReference type="HAMAP" id="MF_01570">
    <property type="entry name" value="Pro_tRNA_synth_type2"/>
    <property type="match status" value="1"/>
</dbReference>
<dbReference type="InterPro" id="IPR002314">
    <property type="entry name" value="aa-tRNA-synt_IIb"/>
</dbReference>
<dbReference type="InterPro" id="IPR006195">
    <property type="entry name" value="aa-tRNA-synth_II"/>
</dbReference>
<dbReference type="InterPro" id="IPR045864">
    <property type="entry name" value="aa-tRNA-synth_II/BPL/LPL"/>
</dbReference>
<dbReference type="InterPro" id="IPR004154">
    <property type="entry name" value="Anticodon-bd"/>
</dbReference>
<dbReference type="InterPro" id="IPR036621">
    <property type="entry name" value="Anticodon-bd_dom_sf"/>
</dbReference>
<dbReference type="InterPro" id="IPR002316">
    <property type="entry name" value="Pro-tRNA-ligase_IIa"/>
</dbReference>
<dbReference type="InterPro" id="IPR004500">
    <property type="entry name" value="Pro-tRNA-synth_IIa_bac-type"/>
</dbReference>
<dbReference type="InterPro" id="IPR050062">
    <property type="entry name" value="Pro-tRNA_synthetase"/>
</dbReference>
<dbReference type="InterPro" id="IPR023716">
    <property type="entry name" value="Prolyl-tRNA_ligase_IIa_type2"/>
</dbReference>
<dbReference type="InterPro" id="IPR044140">
    <property type="entry name" value="ProRS_anticodon_short"/>
</dbReference>
<dbReference type="InterPro" id="IPR033730">
    <property type="entry name" value="ProRS_core_prok"/>
</dbReference>
<dbReference type="NCBIfam" id="NF008979">
    <property type="entry name" value="PRK12325.1"/>
    <property type="match status" value="1"/>
</dbReference>
<dbReference type="NCBIfam" id="TIGR00409">
    <property type="entry name" value="proS_fam_II"/>
    <property type="match status" value="1"/>
</dbReference>
<dbReference type="PANTHER" id="PTHR42753">
    <property type="entry name" value="MITOCHONDRIAL RIBOSOME PROTEIN L39/PROLYL-TRNA LIGASE FAMILY MEMBER"/>
    <property type="match status" value="1"/>
</dbReference>
<dbReference type="PANTHER" id="PTHR42753:SF2">
    <property type="entry name" value="PROLINE--TRNA LIGASE"/>
    <property type="match status" value="1"/>
</dbReference>
<dbReference type="Pfam" id="PF03129">
    <property type="entry name" value="HGTP_anticodon"/>
    <property type="match status" value="1"/>
</dbReference>
<dbReference type="Pfam" id="PF00587">
    <property type="entry name" value="tRNA-synt_2b"/>
    <property type="match status" value="1"/>
</dbReference>
<dbReference type="PRINTS" id="PR01046">
    <property type="entry name" value="TRNASYNTHPRO"/>
</dbReference>
<dbReference type="SUPFAM" id="SSF52954">
    <property type="entry name" value="Class II aaRS ABD-related"/>
    <property type="match status" value="1"/>
</dbReference>
<dbReference type="SUPFAM" id="SSF55681">
    <property type="entry name" value="Class II aaRS and biotin synthetases"/>
    <property type="match status" value="1"/>
</dbReference>
<dbReference type="PROSITE" id="PS50862">
    <property type="entry name" value="AA_TRNA_LIGASE_II"/>
    <property type="match status" value="1"/>
</dbReference>
<feature type="chain" id="PRO_0000248910" description="Proline--tRNA ligase">
    <location>
        <begin position="1"/>
        <end position="439"/>
    </location>
</feature>
<comment type="function">
    <text evidence="1">Catalyzes the attachment of proline to tRNA(Pro) in a two-step reaction: proline is first activated by ATP to form Pro-AMP and then transferred to the acceptor end of tRNA(Pro).</text>
</comment>
<comment type="catalytic activity">
    <reaction evidence="1">
        <text>tRNA(Pro) + L-proline + ATP = L-prolyl-tRNA(Pro) + AMP + diphosphate</text>
        <dbReference type="Rhea" id="RHEA:14305"/>
        <dbReference type="Rhea" id="RHEA-COMP:9700"/>
        <dbReference type="Rhea" id="RHEA-COMP:9702"/>
        <dbReference type="ChEBI" id="CHEBI:30616"/>
        <dbReference type="ChEBI" id="CHEBI:33019"/>
        <dbReference type="ChEBI" id="CHEBI:60039"/>
        <dbReference type="ChEBI" id="CHEBI:78442"/>
        <dbReference type="ChEBI" id="CHEBI:78532"/>
        <dbReference type="ChEBI" id="CHEBI:456215"/>
        <dbReference type="EC" id="6.1.1.15"/>
    </reaction>
</comment>
<comment type="subunit">
    <text evidence="1">Homodimer.</text>
</comment>
<comment type="subcellular location">
    <subcellularLocation>
        <location evidence="1">Cytoplasm</location>
    </subcellularLocation>
</comment>
<comment type="similarity">
    <text evidence="1">Belongs to the class-II aminoacyl-tRNA synthetase family. ProS type 2 subfamily.</text>
</comment>
<protein>
    <recommendedName>
        <fullName evidence="1">Proline--tRNA ligase</fullName>
        <ecNumber evidence="1">6.1.1.15</ecNumber>
    </recommendedName>
    <alternativeName>
        <fullName evidence="1">Prolyl-tRNA synthetase</fullName>
        <shortName evidence="1">ProRS</shortName>
    </alternativeName>
</protein>
<gene>
    <name evidence="1" type="primary">proS</name>
    <name type="ordered locus">RPB_2597</name>
</gene>
<sequence length="439" mass="49301">MRLSRFFLPILKENPKEAEIVSHRLMLRAGMLRQEAAGIYAWLPLGHRVLKKIEQIVREEQNRAGAIELLMPTLQLADLWRESGRYDAYGPEMLRISDRHKRELLYGPTNEEMITEIFRAYVKSYKSLPLNLYHIQWKFRDEQRPRFGVMRGREFLMKDAYSFDVDEAAARKSYNRMFVAYLRTFARMGLKAIPMRAETGPIGGDLSHEFIVLAETGESGVYCDRDVLSLPVPDETVDYDGDLTPIIKQWTSVYAATEDVHDAVRYESEVPEANRLHTRGIEVGQIFYFGTKYSDSMKANVAGPDGTDAPIHGGSYGVGVSRLVGAIIEACHDDNGIIWPEEVAPFRVAILNLKQGDAATDAACEQLYKELAAKGVDVLYDDTDQRAGAKFATADLIGIPWQVLVGPKGLADGKIELKRRSDGSRENIALAETVARLAP</sequence>
<keyword id="KW-0030">Aminoacyl-tRNA synthetase</keyword>
<keyword id="KW-0067">ATP-binding</keyword>
<keyword id="KW-0963">Cytoplasm</keyword>
<keyword id="KW-0436">Ligase</keyword>
<keyword id="KW-0547">Nucleotide-binding</keyword>
<keyword id="KW-0648">Protein biosynthesis</keyword>
<keyword id="KW-1185">Reference proteome</keyword>
<proteinExistence type="inferred from homology"/>